<protein>
    <recommendedName>
        <fullName evidence="1">Fumarate reductase subunit C</fullName>
    </recommendedName>
    <alternativeName>
        <fullName evidence="1">Fumarate reductase 15 kDa hydrophobic protein</fullName>
    </alternativeName>
    <alternativeName>
        <fullName evidence="1">Quinol-fumarate reductase subunit C</fullName>
        <shortName evidence="1">QFR subunit C</shortName>
    </alternativeName>
</protein>
<reference key="1">
    <citation type="journal article" date="2011" name="J. Bacteriol.">
        <title>Comparative genomics of 28 Salmonella enterica isolates: evidence for CRISPR-mediated adaptive sublineage evolution.</title>
        <authorList>
            <person name="Fricke W.F."/>
            <person name="Mammel M.K."/>
            <person name="McDermott P.F."/>
            <person name="Tartera C."/>
            <person name="White D.G."/>
            <person name="Leclerc J.E."/>
            <person name="Ravel J."/>
            <person name="Cebula T.A."/>
        </authorList>
    </citation>
    <scope>NUCLEOTIDE SEQUENCE [LARGE SCALE GENOMIC DNA]</scope>
    <source>
        <strain>CT_02021853</strain>
    </source>
</reference>
<proteinExistence type="inferred from homology"/>
<feature type="chain" id="PRO_1000132381" description="Fumarate reductase subunit C">
    <location>
        <begin position="1"/>
        <end position="131"/>
    </location>
</feature>
<feature type="transmembrane region" description="Helical" evidence="1">
    <location>
        <begin position="30"/>
        <end position="50"/>
    </location>
</feature>
<feature type="transmembrane region" description="Helical" evidence="1">
    <location>
        <begin position="57"/>
        <end position="77"/>
    </location>
</feature>
<feature type="transmembrane region" description="Helical" evidence="1">
    <location>
        <begin position="109"/>
        <end position="129"/>
    </location>
</feature>
<evidence type="ECO:0000255" key="1">
    <source>
        <dbReference type="HAMAP-Rule" id="MF_00708"/>
    </source>
</evidence>
<dbReference type="EMBL" id="CP001144">
    <property type="protein sequence ID" value="ACH76688.1"/>
    <property type="molecule type" value="Genomic_DNA"/>
</dbReference>
<dbReference type="RefSeq" id="WP_000208766.1">
    <property type="nucleotide sequence ID" value="NC_011205.1"/>
</dbReference>
<dbReference type="SMR" id="B5FRL1"/>
<dbReference type="KEGG" id="sed:SeD_A4738"/>
<dbReference type="HOGENOM" id="CLU_156492_0_0_6"/>
<dbReference type="Proteomes" id="UP000008322">
    <property type="component" value="Chromosome"/>
</dbReference>
<dbReference type="GO" id="GO:0045283">
    <property type="term" value="C:fumarate reductase complex"/>
    <property type="evidence" value="ECO:0007669"/>
    <property type="project" value="UniProtKB-UniRule"/>
</dbReference>
<dbReference type="GO" id="GO:0005886">
    <property type="term" value="C:plasma membrane"/>
    <property type="evidence" value="ECO:0007669"/>
    <property type="project" value="UniProtKB-SubCell"/>
</dbReference>
<dbReference type="GO" id="GO:0000104">
    <property type="term" value="F:succinate dehydrogenase activity"/>
    <property type="evidence" value="ECO:0007669"/>
    <property type="project" value="UniProtKB-UniRule"/>
</dbReference>
<dbReference type="CDD" id="cd00546">
    <property type="entry name" value="QFR_TypeD_subunitC"/>
    <property type="match status" value="1"/>
</dbReference>
<dbReference type="Gene3D" id="1.20.1300.10">
    <property type="entry name" value="Fumarate reductase/succinate dehydrogenase, transmembrane subunit"/>
    <property type="match status" value="1"/>
</dbReference>
<dbReference type="HAMAP" id="MF_00708">
    <property type="entry name" value="Fumarate_red_C"/>
    <property type="match status" value="1"/>
</dbReference>
<dbReference type="InterPro" id="IPR003510">
    <property type="entry name" value="Fumarate_red_C"/>
</dbReference>
<dbReference type="InterPro" id="IPR034804">
    <property type="entry name" value="SQR/QFR_C/D"/>
</dbReference>
<dbReference type="NCBIfam" id="NF003445">
    <property type="entry name" value="PRK04987.1"/>
    <property type="match status" value="1"/>
</dbReference>
<dbReference type="Pfam" id="PF02300">
    <property type="entry name" value="Fumarate_red_C"/>
    <property type="match status" value="1"/>
</dbReference>
<dbReference type="PIRSF" id="PIRSF000180">
    <property type="entry name" value="FrdC"/>
    <property type="match status" value="1"/>
</dbReference>
<dbReference type="SUPFAM" id="SSF81343">
    <property type="entry name" value="Fumarate reductase respiratory complex transmembrane subunits"/>
    <property type="match status" value="1"/>
</dbReference>
<accession>B5FRL1</accession>
<sequence>MTTKRKPYVRPMTSTWWKKLPFYRFYMLREGTAVPTVWFSIELIFGLFALKHGAESWMGFVGFLQNPVVVILNLITLAAALLHTKTWFELAPKAANIIVKDEKMGPEPIIKGLWVVTAVVTVVILYVALFW</sequence>
<name>FRDC_SALDC</name>
<comment type="function">
    <text evidence="1">Two distinct, membrane-bound, FAD-containing enzymes are responsible for the catalysis of fumarate and succinate interconversion; fumarate reductase is used in anaerobic growth, and succinate dehydrogenase is used in aerobic growth. Anchors the catalytic components of the fumarate reductase complex to the cell inner membrane, binds quinones.</text>
</comment>
<comment type="subunit">
    <text evidence="1">Part of an enzyme complex containing four subunits: a flavoprotein (FrdA), an iron-sulfur protein (FrdB), and two hydrophobic anchor proteins (FrdC and FrdD).</text>
</comment>
<comment type="subcellular location">
    <subcellularLocation>
        <location evidence="1">Cell inner membrane</location>
        <topology evidence="1">Multi-pass membrane protein</topology>
    </subcellularLocation>
</comment>
<comment type="similarity">
    <text evidence="1">Belongs to the FrdC family.</text>
</comment>
<organism>
    <name type="scientific">Salmonella dublin (strain CT_02021853)</name>
    <dbReference type="NCBI Taxonomy" id="439851"/>
    <lineage>
        <taxon>Bacteria</taxon>
        <taxon>Pseudomonadati</taxon>
        <taxon>Pseudomonadota</taxon>
        <taxon>Gammaproteobacteria</taxon>
        <taxon>Enterobacterales</taxon>
        <taxon>Enterobacteriaceae</taxon>
        <taxon>Salmonella</taxon>
    </lineage>
</organism>
<gene>
    <name evidence="1" type="primary">frdC</name>
    <name type="ordered locus">SeD_A4738</name>
</gene>
<keyword id="KW-0997">Cell inner membrane</keyword>
<keyword id="KW-1003">Cell membrane</keyword>
<keyword id="KW-0472">Membrane</keyword>
<keyword id="KW-0812">Transmembrane</keyword>
<keyword id="KW-1133">Transmembrane helix</keyword>